<keyword id="KW-1015">Disulfide bond</keyword>
<keyword id="KW-0325">Glycoprotein</keyword>
<keyword id="KW-0964">Secreted</keyword>
<keyword id="KW-0732">Signal</keyword>
<feature type="signal peptide" evidence="2">
    <location>
        <begin position="1"/>
        <end position="28"/>
    </location>
</feature>
<feature type="chain" id="PRO_5004735646" description="Evasin P1156" evidence="2">
    <location>
        <begin position="29"/>
        <end position="108"/>
    </location>
</feature>
<feature type="region of interest" description="Disordered" evidence="4">
    <location>
        <begin position="89"/>
        <end position="108"/>
    </location>
</feature>
<feature type="compositionally biased region" description="Basic and acidic residues" evidence="4">
    <location>
        <begin position="96"/>
        <end position="108"/>
    </location>
</feature>
<feature type="glycosylation site" description="N-linked (GlcNAc...) asparagine" evidence="3">
    <location>
        <position position="44"/>
    </location>
</feature>
<feature type="disulfide bond" evidence="1">
    <location>
        <begin position="41"/>
        <end position="63"/>
    </location>
</feature>
<feature type="disulfide bond" evidence="1">
    <location>
        <begin position="45"/>
        <end position="65"/>
    </location>
</feature>
<feature type="disulfide bond" evidence="1">
    <location>
        <begin position="56"/>
        <end position="76"/>
    </location>
</feature>
<name>E1156_IXORI</name>
<proteinExistence type="inferred from homology"/>
<sequence>MEVKTYAFLQIAVFIFLGMQIFASLTDAADDDNELFTVQYCGMNCTKDEGGTWTGCTGKKEGCKCYHESGKNYGLCLSTEYTDFSQYGNPSDSEIEAAKPKRSDTLSH</sequence>
<accession>V5HBW0</accession>
<reference evidence="8" key="1">
    <citation type="journal article" date="2015" name="Sci. Rep.">
        <title>Tissue- and time-dependent transcription in Ixodes ricinus salivary glands and midguts when blood feeding on the vertebrate host.</title>
        <authorList>
            <person name="Kotsyfakis M."/>
            <person name="Schwarz A."/>
            <person name="Erhart J."/>
            <person name="Ribeiro J.M."/>
        </authorList>
    </citation>
    <scope>NUCLEOTIDE SEQUENCE [LARGE SCALE MRNA]</scope>
</reference>
<reference evidence="7" key="2">
    <citation type="journal article" date="2018" name="Sci. Rep.">
        <title>Genetically engineered two-warhead evasins provide a method to achieve precision targeting of disease-relevant chemokine subsets.</title>
        <authorList>
            <person name="Alenazi Y."/>
            <person name="Singh K."/>
            <person name="Davies G."/>
            <person name="Eaton J.R.O."/>
            <person name="Elders P."/>
            <person name="Kawamura A."/>
            <person name="Bhattacharya S."/>
        </authorList>
    </citation>
    <scope>FUNCTION</scope>
</reference>
<dbReference type="EMBL" id="GANP01012031">
    <property type="protein sequence ID" value="JAB72437.1"/>
    <property type="molecule type" value="mRNA"/>
</dbReference>
<dbReference type="GO" id="GO:0005576">
    <property type="term" value="C:extracellular region"/>
    <property type="evidence" value="ECO:0007669"/>
    <property type="project" value="UniProtKB-SubCell"/>
</dbReference>
<dbReference type="GO" id="GO:0019956">
    <property type="term" value="F:chemokine binding"/>
    <property type="evidence" value="ECO:0000314"/>
    <property type="project" value="UniProtKB"/>
</dbReference>
<dbReference type="GO" id="GO:1900137">
    <property type="term" value="P:negative regulation of chemokine activity"/>
    <property type="evidence" value="ECO:0000314"/>
    <property type="project" value="UniProtKB"/>
</dbReference>
<protein>
    <recommendedName>
        <fullName evidence="6">Evasin P1156</fullName>
    </recommendedName>
</protein>
<evidence type="ECO:0000250" key="1">
    <source>
        <dbReference type="UniProtKB" id="P0C8E8"/>
    </source>
</evidence>
<evidence type="ECO:0000255" key="2"/>
<evidence type="ECO:0000255" key="3">
    <source>
        <dbReference type="PROSITE-ProRule" id="PRU00498"/>
    </source>
</evidence>
<evidence type="ECO:0000256" key="4">
    <source>
        <dbReference type="SAM" id="MobiDB-lite"/>
    </source>
</evidence>
<evidence type="ECO:0000269" key="5">
    <source>
    </source>
</evidence>
<evidence type="ECO:0000303" key="6">
    <source>
    </source>
</evidence>
<evidence type="ECO:0000305" key="7"/>
<evidence type="ECO:0000312" key="8">
    <source>
        <dbReference type="EMBL" id="JAB72437.1"/>
    </source>
</evidence>
<comment type="function">
    <text evidence="5">Salivary chemokine-binding protein which has chemokine-neutralizing activity and binds to host chemokines CXCL1, CXCL2, CXCL3, CXCL5, CXCL6 and CXCL8.</text>
</comment>
<comment type="subcellular location">
    <subcellularLocation>
        <location evidence="7">Secreted</location>
    </subcellularLocation>
</comment>
<organism evidence="8">
    <name type="scientific">Ixodes ricinus</name>
    <name type="common">Common tick</name>
    <name type="synonym">Acarus ricinus</name>
    <dbReference type="NCBI Taxonomy" id="34613"/>
    <lineage>
        <taxon>Eukaryota</taxon>
        <taxon>Metazoa</taxon>
        <taxon>Ecdysozoa</taxon>
        <taxon>Arthropoda</taxon>
        <taxon>Chelicerata</taxon>
        <taxon>Arachnida</taxon>
        <taxon>Acari</taxon>
        <taxon>Parasitiformes</taxon>
        <taxon>Ixodida</taxon>
        <taxon>Ixodoidea</taxon>
        <taxon>Ixodidae</taxon>
        <taxon>Ixodinae</taxon>
        <taxon>Ixodes</taxon>
    </lineage>
</organism>